<organismHost>
    <name type="scientific">Homo sapiens</name>
    <name type="common">Human</name>
    <dbReference type="NCBI Taxonomy" id="9606"/>
</organismHost>
<organismHost>
    <name type="scientific">Pan troglodytes</name>
    <name type="common">Chimpanzee</name>
    <dbReference type="NCBI Taxonomy" id="9598"/>
</organismHost>
<protein>
    <recommendedName>
        <fullName evidence="1">Capsid protein</fullName>
    </recommendedName>
    <alternativeName>
        <fullName evidence="1">Core antigen</fullName>
    </alternativeName>
    <alternativeName>
        <fullName evidence="1">Core protein</fullName>
    </alternativeName>
    <alternativeName>
        <fullName evidence="1">HBcAg</fullName>
    </alternativeName>
    <alternativeName>
        <fullName evidence="1">p21.5</fullName>
    </alternativeName>
</protein>
<dbReference type="EMBL" id="AB048704">
    <property type="status" value="NOT_ANNOTATED_CDS"/>
    <property type="molecule type" value="Genomic_DNA"/>
</dbReference>
<dbReference type="SMR" id="P0C6H8"/>
<dbReference type="Proteomes" id="UP000007927">
    <property type="component" value="Genome"/>
</dbReference>
<dbReference type="GO" id="GO:0043657">
    <property type="term" value="C:host cell"/>
    <property type="evidence" value="ECO:0007669"/>
    <property type="project" value="GOC"/>
</dbReference>
<dbReference type="GO" id="GO:0030430">
    <property type="term" value="C:host cell cytoplasm"/>
    <property type="evidence" value="ECO:0007669"/>
    <property type="project" value="UniProtKB-SubCell"/>
</dbReference>
<dbReference type="GO" id="GO:0039619">
    <property type="term" value="C:T=4 icosahedral viral capsid"/>
    <property type="evidence" value="ECO:0007669"/>
    <property type="project" value="UniProtKB-UniRule"/>
</dbReference>
<dbReference type="GO" id="GO:0003677">
    <property type="term" value="F:DNA binding"/>
    <property type="evidence" value="ECO:0007669"/>
    <property type="project" value="UniProtKB-UniRule"/>
</dbReference>
<dbReference type="GO" id="GO:0003723">
    <property type="term" value="F:RNA binding"/>
    <property type="evidence" value="ECO:0007669"/>
    <property type="project" value="UniProtKB-UniRule"/>
</dbReference>
<dbReference type="GO" id="GO:0005198">
    <property type="term" value="F:structural molecule activity"/>
    <property type="evidence" value="ECO:0007669"/>
    <property type="project" value="UniProtKB-UniRule"/>
</dbReference>
<dbReference type="GO" id="GO:0075521">
    <property type="term" value="P:microtubule-dependent intracellular transport of viral material towards nucleus"/>
    <property type="evidence" value="ECO:0007669"/>
    <property type="project" value="UniProtKB-UniRule"/>
</dbReference>
<dbReference type="GO" id="GO:0046718">
    <property type="term" value="P:symbiont entry into host cell"/>
    <property type="evidence" value="ECO:0007669"/>
    <property type="project" value="UniProtKB-UniRule"/>
</dbReference>
<dbReference type="GO" id="GO:0075732">
    <property type="term" value="P:viral penetration into host nucleus"/>
    <property type="evidence" value="ECO:0007669"/>
    <property type="project" value="UniProtKB-UniRule"/>
</dbReference>
<dbReference type="FunFam" id="1.10.4090.10:FF:000001">
    <property type="entry name" value="Capsid protein"/>
    <property type="match status" value="1"/>
</dbReference>
<dbReference type="Gene3D" id="1.10.4090.10">
    <property type="entry name" value="Viral capsid, core domain supefamily, Hepatitis B virus"/>
    <property type="match status" value="1"/>
</dbReference>
<dbReference type="HAMAP" id="MF_04076">
    <property type="entry name" value="HBV_HBEAG"/>
    <property type="match status" value="1"/>
</dbReference>
<dbReference type="InterPro" id="IPR002006">
    <property type="entry name" value="Hepatitis_core"/>
</dbReference>
<dbReference type="InterPro" id="IPR036459">
    <property type="entry name" value="Viral_capsid_core_dom_sf_HBV"/>
</dbReference>
<dbReference type="Pfam" id="PF00906">
    <property type="entry name" value="Hepatitis_core"/>
    <property type="match status" value="3"/>
</dbReference>
<dbReference type="SUPFAM" id="SSF47852">
    <property type="entry name" value="Hepatitis B viral capsid (hbcag)"/>
    <property type="match status" value="1"/>
</dbReference>
<reference key="1">
    <citation type="journal article" date="2001" name="J. Gen. Virol.">
        <title>A novel variant genotype C of hepatitis B virus identified in isolates from Australian Aborigines: complete genome sequence and phylogenetic relatedness.</title>
        <authorList>
            <person name="Sugauchi F."/>
            <person name="Mizokami M."/>
            <person name="Orito E."/>
            <person name="Ohno T."/>
            <person name="Kato H."/>
            <person name="Suzuki S."/>
            <person name="Kimura Y."/>
            <person name="Ueda R."/>
            <person name="Butterworth L.A."/>
            <person name="Cooksley W.G."/>
        </authorList>
    </citation>
    <scope>NUCLEOTIDE SEQUENCE [GENOMIC DNA]</scope>
</reference>
<organism>
    <name type="scientific">Hepatitis B virus genotype C subtype ayw (isolate Australia/AustRC/1992)</name>
    <name type="common">HBV-C</name>
    <dbReference type="NCBI Taxonomy" id="489471"/>
    <lineage>
        <taxon>Viruses</taxon>
        <taxon>Riboviria</taxon>
        <taxon>Pararnavirae</taxon>
        <taxon>Artverviricota</taxon>
        <taxon>Revtraviricetes</taxon>
        <taxon>Blubervirales</taxon>
        <taxon>Hepadnaviridae</taxon>
        <taxon>Orthohepadnavirus</taxon>
        <taxon>Hepatitis B virus</taxon>
        <taxon>hepatitis B virus genotype C</taxon>
    </lineage>
</organism>
<name>CAPSD_HBVC9</name>
<evidence type="ECO:0000255" key="1">
    <source>
        <dbReference type="HAMAP-Rule" id="MF_04076"/>
    </source>
</evidence>
<evidence type="ECO:0000256" key="2">
    <source>
        <dbReference type="SAM" id="MobiDB-lite"/>
    </source>
</evidence>
<feature type="chain" id="PRO_0000324368" description="Capsid protein">
    <location>
        <begin position="1"/>
        <end position="183"/>
    </location>
</feature>
<feature type="repeat" description="1; half-length">
    <location>
        <begin position="155"/>
        <end position="161"/>
    </location>
</feature>
<feature type="repeat" description="2">
    <location>
        <begin position="162"/>
        <end position="169"/>
    </location>
</feature>
<feature type="repeat" description="3">
    <location>
        <begin position="170"/>
        <end position="177"/>
    </location>
</feature>
<feature type="region of interest" description="Disordered" evidence="2">
    <location>
        <begin position="143"/>
        <end position="183"/>
    </location>
</feature>
<feature type="region of interest" description="3 X 8 AA repeats of S-P-R-R-R-[PR]-S-Q">
    <location>
        <begin position="155"/>
        <end position="177"/>
    </location>
</feature>
<feature type="region of interest" description="RNA binding" evidence="1">
    <location>
        <begin position="177"/>
        <end position="183"/>
    </location>
</feature>
<feature type="short sequence motif" description="Bipartite nuclear localization signal" evidence="1">
    <location>
        <begin position="158"/>
        <end position="175"/>
    </location>
</feature>
<feature type="compositionally biased region" description="Basic residues" evidence="2">
    <location>
        <begin position="149"/>
        <end position="176"/>
    </location>
</feature>
<feature type="modified residue" description="Phosphoserine; by host" evidence="1">
    <location>
        <position position="155"/>
    </location>
</feature>
<feature type="modified residue" description="Phosphoserine; by host" evidence="1">
    <location>
        <position position="162"/>
    </location>
</feature>
<feature type="modified residue" description="Phosphoserine; by host" evidence="1">
    <location>
        <position position="170"/>
    </location>
</feature>
<keyword id="KW-0024">Alternative initiation</keyword>
<keyword id="KW-0167">Capsid protein</keyword>
<keyword id="KW-1176">Cytoplasmic inwards viral transport</keyword>
<keyword id="KW-0238">DNA-binding</keyword>
<keyword id="KW-1035">Host cytoplasm</keyword>
<keyword id="KW-0945">Host-virus interaction</keyword>
<keyword id="KW-1177">Microtubular inwards viral transport</keyword>
<keyword id="KW-0597">Phosphoprotein</keyword>
<keyword id="KW-0677">Repeat</keyword>
<keyword id="KW-0694">RNA-binding</keyword>
<keyword id="KW-1144">T=4 icosahedral capsid protein</keyword>
<keyword id="KW-1163">Viral penetration into host nucleus</keyword>
<keyword id="KW-0946">Virion</keyword>
<keyword id="KW-1160">Virus entry into host cell</keyword>
<sequence>MDIDPYKEFGASVELLSFLPSDFFPNIRDLLDTASALYREALESPEHCSPHHTALRQAILCWGELMNLATWVGSNLEDPASRELVVSYVNVNMGLKIRQLLWFHISCLTFGRETVLEYLVSFGVWIRTPIAYRPPNAPILSTLPETTVVRRRGRSPRRRTPSPRRRRSQSPRRRRSQSRESQC</sequence>
<proteinExistence type="inferred from homology"/>
<comment type="function">
    <text evidence="1">Self assembles to form an icosahedral capsid. Most capsids appear to be large particles with an icosahedral symmetry of T=4 and consist of 240 copies of capsid protein, though a fraction forms smaller T=3 particles consisting of 180 capsid proteins. Entering capsids are transported along microtubules to the nucleus. Phosphorylation of the capsid is thought to induce exposure of nuclear localization signal in the C-terminal portion of the capsid protein that allows binding to the nuclear pore complex via the importin (karyopherin-) alpha and beta. Capsids are imported in intact form through the nuclear pore into the nuclear basket, where it probably binds NUP153. Only capsids that contain the mature viral genome can release the viral DNA and capsid protein into the nucleoplasm. Immature capsids get stuck in the basket. Capsids encapsulate the pre-genomic RNA and the P protein. Pre-genomic RNA is reverse-transcribed into DNA while the capsid is still in the cytoplasm. The capsid can then either be directed to the nucleus, providing more genomes for transcription, or bud through the endoplasmic reticulum to provide new virions.</text>
</comment>
<comment type="subunit">
    <text evidence="1">Homodimerizes, then multimerizes. Interacts with cytosol exposed regions of viral L glycoprotein present in the reticulum-to-Golgi compartment. Interacts with human FLNB. Phosphorylated form interacts with host importin alpha; this interaction depends on the exposure of the NLS, which itself depends upon genome maturation and/or phosphorylation of the capsid protein. Interacts with host NUP153.</text>
</comment>
<comment type="subcellular location">
    <subcellularLocation>
        <location evidence="1">Virion</location>
    </subcellularLocation>
    <subcellularLocation>
        <location evidence="1">Host cytoplasm</location>
    </subcellularLocation>
</comment>
<comment type="alternative products">
    <event type="alternative initiation"/>
    <isoform>
        <id>P0C6H8-1</id>
        <name>Capsid protein</name>
        <sequence type="displayed"/>
    </isoform>
    <isoform>
        <id>P0C6K5-1</id>
        <name>External core antigen</name>
        <sequence type="external"/>
    </isoform>
</comment>
<comment type="PTM">
    <text evidence="1">Phosphorylated by host SRPK1, SRPK2, and maybe protein kinase C or GAPDH. Phosphorylation is critical for pregenomic RNA packaging. Protein kinase C phosphorylation is stimulated by HBx protein and may play a role in transport of the viral genome to the nucleus at the late step during the viral replication cycle.</text>
</comment>
<comment type="similarity">
    <text evidence="1">Belongs to the orthohepadnavirus core antigen family.</text>
</comment>
<gene>
    <name evidence="1" type="primary">C</name>
</gene>
<accession>P0C6H8</accession>